<protein>
    <recommendedName>
        <fullName evidence="1">Cell division topological specificity factor</fullName>
    </recommendedName>
</protein>
<accession>Q0VQI2</accession>
<dbReference type="EMBL" id="AM286690">
    <property type="protein sequence ID" value="CAL16566.1"/>
    <property type="molecule type" value="Genomic_DNA"/>
</dbReference>
<dbReference type="RefSeq" id="WP_011588401.1">
    <property type="nucleotide sequence ID" value="NC_008260.1"/>
</dbReference>
<dbReference type="SMR" id="Q0VQI2"/>
<dbReference type="STRING" id="393595.ABO_1118"/>
<dbReference type="KEGG" id="abo:ABO_1118"/>
<dbReference type="eggNOG" id="COG0851">
    <property type="taxonomic scope" value="Bacteria"/>
</dbReference>
<dbReference type="HOGENOM" id="CLU_137929_2_1_6"/>
<dbReference type="OrthoDB" id="9802655at2"/>
<dbReference type="Proteomes" id="UP000008871">
    <property type="component" value="Chromosome"/>
</dbReference>
<dbReference type="GO" id="GO:0051301">
    <property type="term" value="P:cell division"/>
    <property type="evidence" value="ECO:0007669"/>
    <property type="project" value="UniProtKB-KW"/>
</dbReference>
<dbReference type="GO" id="GO:0032955">
    <property type="term" value="P:regulation of division septum assembly"/>
    <property type="evidence" value="ECO:0007669"/>
    <property type="project" value="InterPro"/>
</dbReference>
<dbReference type="FunFam" id="3.30.1070.10:FF:000001">
    <property type="entry name" value="Cell division topological specificity factor"/>
    <property type="match status" value="1"/>
</dbReference>
<dbReference type="Gene3D" id="3.30.1070.10">
    <property type="entry name" value="Cell division topological specificity factor MinE"/>
    <property type="match status" value="1"/>
</dbReference>
<dbReference type="HAMAP" id="MF_00262">
    <property type="entry name" value="MinE"/>
    <property type="match status" value="1"/>
</dbReference>
<dbReference type="InterPro" id="IPR005527">
    <property type="entry name" value="MinE"/>
</dbReference>
<dbReference type="InterPro" id="IPR036707">
    <property type="entry name" value="MinE_sf"/>
</dbReference>
<dbReference type="NCBIfam" id="TIGR01215">
    <property type="entry name" value="minE"/>
    <property type="match status" value="1"/>
</dbReference>
<dbReference type="NCBIfam" id="NF001422">
    <property type="entry name" value="PRK00296.1"/>
    <property type="match status" value="1"/>
</dbReference>
<dbReference type="Pfam" id="PF03776">
    <property type="entry name" value="MinE"/>
    <property type="match status" value="1"/>
</dbReference>
<dbReference type="SUPFAM" id="SSF55229">
    <property type="entry name" value="Cell division protein MinE topological specificity domain"/>
    <property type="match status" value="1"/>
</dbReference>
<evidence type="ECO:0000255" key="1">
    <source>
        <dbReference type="HAMAP-Rule" id="MF_00262"/>
    </source>
</evidence>
<comment type="function">
    <text evidence="1">Prevents the cell division inhibition by proteins MinC and MinD at internal division sites while permitting inhibition at polar sites. This ensures cell division at the proper site by restricting the formation of a division septum at the midpoint of the long axis of the cell.</text>
</comment>
<comment type="similarity">
    <text evidence="1">Belongs to the MinE family.</text>
</comment>
<keyword id="KW-0131">Cell cycle</keyword>
<keyword id="KW-0132">Cell division</keyword>
<keyword id="KW-1185">Reference proteome</keyword>
<gene>
    <name evidence="1" type="primary">minE</name>
    <name type="ordered locus">ABO_1118</name>
</gene>
<feature type="chain" id="PRO_0000298067" description="Cell division topological specificity factor">
    <location>
        <begin position="1"/>
        <end position="83"/>
    </location>
</feature>
<sequence length="83" mass="9398">MSIFSYLLPKKQNTASVAKERLQIIVARERSTRGGPDYLPQLQEELLQVVRKYVPVDQDAVNVQVDRESGCEILELNITLPEG</sequence>
<organism>
    <name type="scientific">Alcanivorax borkumensis (strain ATCC 700651 / DSM 11573 / NCIMB 13689 / SK2)</name>
    <dbReference type="NCBI Taxonomy" id="393595"/>
    <lineage>
        <taxon>Bacteria</taxon>
        <taxon>Pseudomonadati</taxon>
        <taxon>Pseudomonadota</taxon>
        <taxon>Gammaproteobacteria</taxon>
        <taxon>Oceanospirillales</taxon>
        <taxon>Alcanivoracaceae</taxon>
        <taxon>Alcanivorax</taxon>
    </lineage>
</organism>
<name>MINE_ALCBS</name>
<proteinExistence type="inferred from homology"/>
<reference key="1">
    <citation type="journal article" date="2006" name="Nat. Biotechnol.">
        <title>Genome sequence of the ubiquitous hydrocarbon-degrading marine bacterium Alcanivorax borkumensis.</title>
        <authorList>
            <person name="Schneiker S."/>
            <person name="Martins dos Santos V.A.P."/>
            <person name="Bartels D."/>
            <person name="Bekel T."/>
            <person name="Brecht M."/>
            <person name="Buhrmester J."/>
            <person name="Chernikova T.N."/>
            <person name="Denaro R."/>
            <person name="Ferrer M."/>
            <person name="Gertler C."/>
            <person name="Goesmann A."/>
            <person name="Golyshina O.V."/>
            <person name="Kaminski F."/>
            <person name="Khachane A.N."/>
            <person name="Lang S."/>
            <person name="Linke B."/>
            <person name="McHardy A.C."/>
            <person name="Meyer F."/>
            <person name="Nechitaylo T."/>
            <person name="Puehler A."/>
            <person name="Regenhardt D."/>
            <person name="Rupp O."/>
            <person name="Sabirova J.S."/>
            <person name="Selbitschka W."/>
            <person name="Yakimov M.M."/>
            <person name="Timmis K.N."/>
            <person name="Vorhoelter F.-J."/>
            <person name="Weidner S."/>
            <person name="Kaiser O."/>
            <person name="Golyshin P.N."/>
        </authorList>
    </citation>
    <scope>NUCLEOTIDE SEQUENCE [LARGE SCALE GENOMIC DNA]</scope>
    <source>
        <strain>ATCC 700651 / DSM 11573 / NCIMB 13689 / SK2</strain>
    </source>
</reference>